<reference key="1">
    <citation type="journal article" date="2003" name="PLoS Biol.">
        <title>The genome sequence of Caenorhabditis briggsae: a platform for comparative genomics.</title>
        <authorList>
            <person name="Stein L.D."/>
            <person name="Bao Z."/>
            <person name="Blasiar D."/>
            <person name="Blumenthal T."/>
            <person name="Brent M.R."/>
            <person name="Chen N."/>
            <person name="Chinwalla A."/>
            <person name="Clarke L."/>
            <person name="Clee C."/>
            <person name="Coghlan A."/>
            <person name="Coulson A."/>
            <person name="D'Eustachio P."/>
            <person name="Fitch D.H.A."/>
            <person name="Fulton L.A."/>
            <person name="Fulton R.E."/>
            <person name="Griffiths-Jones S."/>
            <person name="Harris T.W."/>
            <person name="Hillier L.W."/>
            <person name="Kamath R."/>
            <person name="Kuwabara P.E."/>
            <person name="Mardis E.R."/>
            <person name="Marra M.A."/>
            <person name="Miner T.L."/>
            <person name="Minx P."/>
            <person name="Mullikin J.C."/>
            <person name="Plumb R.W."/>
            <person name="Rogers J."/>
            <person name="Schein J.E."/>
            <person name="Sohrmann M."/>
            <person name="Spieth J."/>
            <person name="Stajich J.E."/>
            <person name="Wei C."/>
            <person name="Willey D."/>
            <person name="Wilson R.K."/>
            <person name="Durbin R.M."/>
            <person name="Waterston R.H."/>
        </authorList>
    </citation>
    <scope>NUCLEOTIDE SEQUENCE [LARGE SCALE GENOMIC DNA]</scope>
    <source>
        <strain>AF16</strain>
    </source>
</reference>
<comment type="function">
    <text evidence="1">Component of the Mediator complex, a coactivator involved in the regulated transcription of nearly all RNA polymerase II-dependent genes. Mediator functions as a bridge to convey information from gene-specific regulatory proteins to the basal RNA polymerase II transcription machinery. Mediator is recruited to promoters by direct interactions with regulatory proteins and serves as a scaffold for the assembly of a functional preinitiation complex with RNA polymerase II and the general transcription factors (By similarity).</text>
</comment>
<comment type="subunit">
    <text evidence="1">Component of the Mediator complex.</text>
</comment>
<comment type="subcellular location">
    <subcellularLocation>
        <location evidence="1">Nucleus</location>
    </subcellularLocation>
</comment>
<comment type="similarity">
    <text evidence="4">Belongs to the Mediator complex subunit 1 family.</text>
</comment>
<accession>Q61X54</accession>
<accession>A8WW94</accession>
<gene>
    <name type="primary">sop-3</name>
    <name type="synonym">mdt-1.1</name>
    <name type="ORF">CBG04122</name>
</gene>
<dbReference type="EMBL" id="HE600956">
    <property type="protein sequence ID" value="CAP24903.3"/>
    <property type="molecule type" value="Genomic_DNA"/>
</dbReference>
<dbReference type="FunCoup" id="Q61X54">
    <property type="interactions" value="1081"/>
</dbReference>
<dbReference type="STRING" id="6238.Q61X54"/>
<dbReference type="EnsemblMetazoa" id="CBG04122a.1">
    <property type="protein sequence ID" value="CBG04122a.1"/>
    <property type="gene ID" value="WBGene00026857"/>
</dbReference>
<dbReference type="KEGG" id="cbr:CBG_04122"/>
<dbReference type="CTD" id="8581509"/>
<dbReference type="WormBase" id="CBG04122a">
    <property type="protein sequence ID" value="CBP14985"/>
    <property type="gene ID" value="WBGene00026857"/>
    <property type="gene designation" value="Cbr-sop-3"/>
</dbReference>
<dbReference type="eggNOG" id="ENOG502QPZ7">
    <property type="taxonomic scope" value="Eukaryota"/>
</dbReference>
<dbReference type="HOGENOM" id="CLU_255799_0_0_1"/>
<dbReference type="InParanoid" id="Q61X54"/>
<dbReference type="OMA" id="PWGDMAK"/>
<dbReference type="Proteomes" id="UP000008549">
    <property type="component" value="Unassembled WGS sequence"/>
</dbReference>
<dbReference type="GO" id="GO:0005634">
    <property type="term" value="C:nucleus"/>
    <property type="evidence" value="ECO:0007669"/>
    <property type="project" value="UniProtKB-SubCell"/>
</dbReference>
<dbReference type="InterPro" id="IPR052824">
    <property type="entry name" value="m6A_RNA_Methylation_Regulator"/>
</dbReference>
<dbReference type="PANTHER" id="PTHR13585">
    <property type="entry name" value="CHASCON, ISOFORM D-RELATED"/>
    <property type="match status" value="1"/>
</dbReference>
<dbReference type="PANTHER" id="PTHR13585:SF19">
    <property type="entry name" value="ZINC FINGER CCCH DOMAIN-CONTAINING PROTEIN 13"/>
    <property type="match status" value="1"/>
</dbReference>
<evidence type="ECO:0000250" key="1"/>
<evidence type="ECO:0000255" key="2"/>
<evidence type="ECO:0000256" key="3">
    <source>
        <dbReference type="SAM" id="MobiDB-lite"/>
    </source>
</evidence>
<evidence type="ECO:0000305" key="4"/>
<organism>
    <name type="scientific">Caenorhabditis briggsae</name>
    <dbReference type="NCBI Taxonomy" id="6238"/>
    <lineage>
        <taxon>Eukaryota</taxon>
        <taxon>Metazoa</taxon>
        <taxon>Ecdysozoa</taxon>
        <taxon>Nematoda</taxon>
        <taxon>Chromadorea</taxon>
        <taxon>Rhabditida</taxon>
        <taxon>Rhabditina</taxon>
        <taxon>Rhabditomorpha</taxon>
        <taxon>Rhabditoidea</taxon>
        <taxon>Rhabditidae</taxon>
        <taxon>Peloderinae</taxon>
        <taxon>Caenorhabditis</taxon>
    </lineage>
</organism>
<proteinExistence type="inferred from homology"/>
<name>MED1_CAEBR</name>
<sequence>MIIEERKSHELNLESIDNDLRLESVRQNAEKLGWDHFARSVRRNLQEKHHTLEASIRLDVLGSLAFMKAHLPIDKDESLNRKIQSLADGLGENCVVAAHIGGISIKSHDVSVDIGIAEEAIVSCKIGYFGQPLFDAPEALALLKSDEFSKLRDSIAEVLSLIPKEISLSDKNACKDALRALEHVLIRDAADSSFSAINNNKYGFYSPRNELRPGRLYYIAEPMLIRVAEKEGKMHADNSHLDSLPYIEIFFVKSNKKSKLPVFNQSGEWTTFNDAKVCICIRFKHAFLFSQHTIRKLAKTVPKSPVVRSYVNFYRYATGRPTVKKNLELLTQFPNETDIQQHYNVDSSKLASDSDSLVVEMFLGDLRELPKLIETLRSEWMHASLWESIVAMCEPNQDAVKKEVRAANLELLLRRNEFNLKFDTEFGNMSMQISEKEPRRYFIRTVSQLTGDTPSSDLDNLLTEKLNSTWSIPISLTFALSTLNCRLNSLLSPLNYVKPSNPFDSDKRQQWWLGANKTHTNITVEKVKKRIVLEIGPVIEPKELVYTRQEDEELCGSLLSSFGEVDQYYVQTSTIGKTGPQPRPKREPSQLASMGMMSAELDMARNRQSMEHAMHPRPQDLRELSNLESARIQMRQSIGAAHAVGLASHQSFTSPGPMRHHPYMGGSYDSPGFYGPNIPASVPFPDAAAFGKGKQRKPRAKKQPGEEVAAPSGRGKGRKGRGAAAVGAGSGRKSSGVVGENQYGMDQMRPQLQRSYSDFQNPMNPQHMPQYAQHMQHMQQMHQMQNMQQYQQMQQYQQNQQYQQNQQYRMHMQQQQLQQQQMQSPQQQSGMNTPKSQRLTDEDSDEDVDPPRLPKPQVSAAVSRPSLPPPHQLGNPMVGYPGMPLQSPNHLPLTPSPLSAPPKPFSPEQHHFGTKMRDNAYWKEAERNIDVKPDIEKLKQQMAASSSCGPVLGTAATSSSSDPSTSGESSNATESASSAPLMKPPTTAQTPKKKLGLEATLSKLRGVQEQALQKQEQQRIQQQDSVDSTNSEQPTPQPQFSQQPGPPLAPNQVNRVMNMSNAFDDEAGSSTNTSDIKPSLASLQKSTGSIVVDPTTPGTSSNIAQPSGVMPSLKKEVEEQPPEREKEKLIVKIPKILKVDDRRDERREKERDRDRDRDRDGDRERDRYEKEDKSQREKDKKERDKERKRRDRDRTEAKKEKDSSGTREKESKKRKREKSEEKDKREPDRKKEKKEGKELSKTTTKSVLPMIPTRTLKNFRIPKKDTVDEDKKEPKDESIPGPSTSSESSTRKEVAPAPISRKESTTSSVAPLQRKESFTSQSGAFPPSEYHREPPKKKPPPISGPAQGSYSGSSNAGPISSSSRGSGNGGSRKPPVLPPPALPMRGPPSDQMYRERTGSMRGFPPSSHYHGSGGSGGSKQVASYAQGLPPGMGPPAAKPHGNSYQASQWVRPPTHRDSHSYHGMPTLGPPQISQREQPPPPPQMIPLPKENPPPPLAPPSRPHRDSRARGGGDNGPDSPEEGTLRIDDE</sequence>
<keyword id="KW-0010">Activator</keyword>
<keyword id="KW-0175">Coiled coil</keyword>
<keyword id="KW-0539">Nucleus</keyword>
<keyword id="KW-1185">Reference proteome</keyword>
<keyword id="KW-0804">Transcription</keyword>
<keyword id="KW-0805">Transcription regulation</keyword>
<feature type="chain" id="PRO_0000302024" description="Mediator of RNA polymerase II transcription subunit 1.1">
    <location>
        <begin position="1"/>
        <end position="1529"/>
    </location>
</feature>
<feature type="region of interest" description="Disordered" evidence="3">
    <location>
        <begin position="685"/>
        <end position="740"/>
    </location>
</feature>
<feature type="region of interest" description="Disordered" evidence="3">
    <location>
        <begin position="807"/>
        <end position="919"/>
    </location>
</feature>
<feature type="region of interest" description="Disordered" evidence="3">
    <location>
        <begin position="933"/>
        <end position="1529"/>
    </location>
</feature>
<feature type="coiled-coil region" evidence="2">
    <location>
        <begin position="1008"/>
        <end position="1032"/>
    </location>
</feature>
<feature type="coiled-coil region" evidence="2">
    <location>
        <begin position="1169"/>
        <end position="1202"/>
    </location>
</feature>
<feature type="compositionally biased region" description="Basic residues" evidence="3">
    <location>
        <begin position="693"/>
        <end position="702"/>
    </location>
</feature>
<feature type="compositionally biased region" description="Low complexity" evidence="3">
    <location>
        <begin position="722"/>
        <end position="739"/>
    </location>
</feature>
<feature type="compositionally biased region" description="Low complexity" evidence="3">
    <location>
        <begin position="807"/>
        <end position="828"/>
    </location>
</feature>
<feature type="compositionally biased region" description="Pro residues" evidence="3">
    <location>
        <begin position="894"/>
        <end position="905"/>
    </location>
</feature>
<feature type="compositionally biased region" description="Basic and acidic residues" evidence="3">
    <location>
        <begin position="908"/>
        <end position="919"/>
    </location>
</feature>
<feature type="compositionally biased region" description="Low complexity" evidence="3">
    <location>
        <begin position="958"/>
        <end position="990"/>
    </location>
</feature>
<feature type="compositionally biased region" description="Low complexity" evidence="3">
    <location>
        <begin position="1008"/>
        <end position="1023"/>
    </location>
</feature>
<feature type="compositionally biased region" description="Polar residues" evidence="3">
    <location>
        <begin position="1051"/>
        <end position="1061"/>
    </location>
</feature>
<feature type="compositionally biased region" description="Polar residues" evidence="3">
    <location>
        <begin position="1068"/>
        <end position="1089"/>
    </location>
</feature>
<feature type="compositionally biased region" description="Polar residues" evidence="3">
    <location>
        <begin position="1096"/>
        <end position="1105"/>
    </location>
</feature>
<feature type="compositionally biased region" description="Basic and acidic residues" evidence="3">
    <location>
        <begin position="1113"/>
        <end position="1130"/>
    </location>
</feature>
<feature type="compositionally biased region" description="Basic and acidic residues" evidence="3">
    <location>
        <begin position="1137"/>
        <end position="1185"/>
    </location>
</feature>
<feature type="compositionally biased region" description="Basic and acidic residues" evidence="3">
    <location>
        <begin position="1192"/>
        <end position="1240"/>
    </location>
</feature>
<feature type="compositionally biased region" description="Basic and acidic residues" evidence="3">
    <location>
        <begin position="1262"/>
        <end position="1278"/>
    </location>
</feature>
<feature type="compositionally biased region" description="Low complexity" evidence="3">
    <location>
        <begin position="1279"/>
        <end position="1288"/>
    </location>
</feature>
<feature type="compositionally biased region" description="Basic and acidic residues" evidence="3">
    <location>
        <begin position="1289"/>
        <end position="1304"/>
    </location>
</feature>
<feature type="compositionally biased region" description="Low complexity" evidence="3">
    <location>
        <begin position="1349"/>
        <end position="1365"/>
    </location>
</feature>
<feature type="compositionally biased region" description="Pro residues" evidence="3">
    <location>
        <begin position="1375"/>
        <end position="1386"/>
    </location>
</feature>
<feature type="compositionally biased region" description="Pro residues" evidence="3">
    <location>
        <begin position="1477"/>
        <end position="1500"/>
    </location>
</feature>
<protein>
    <recommendedName>
        <fullName>Mediator of RNA polymerase II transcription subunit 1.1</fullName>
    </recommendedName>
    <alternativeName>
        <fullName>Mediator complex subunit 1.1</fullName>
    </alternativeName>
</protein>